<feature type="chain" id="PRO_1000205947" description="3-hydroxyacyl-[acyl-carrier-protein] dehydratase FabZ">
    <location>
        <begin position="1"/>
        <end position="145"/>
    </location>
</feature>
<feature type="active site" evidence="1">
    <location>
        <position position="49"/>
    </location>
</feature>
<comment type="function">
    <text evidence="1">Involved in unsaturated fatty acids biosynthesis. Catalyzes the dehydration of short chain beta-hydroxyacyl-ACPs and long chain saturated and unsaturated beta-hydroxyacyl-ACPs.</text>
</comment>
<comment type="catalytic activity">
    <reaction evidence="1">
        <text>a (3R)-hydroxyacyl-[ACP] = a (2E)-enoyl-[ACP] + H2O</text>
        <dbReference type="Rhea" id="RHEA:13097"/>
        <dbReference type="Rhea" id="RHEA-COMP:9925"/>
        <dbReference type="Rhea" id="RHEA-COMP:9945"/>
        <dbReference type="ChEBI" id="CHEBI:15377"/>
        <dbReference type="ChEBI" id="CHEBI:78784"/>
        <dbReference type="ChEBI" id="CHEBI:78827"/>
        <dbReference type="EC" id="4.2.1.59"/>
    </reaction>
</comment>
<comment type="subcellular location">
    <subcellularLocation>
        <location evidence="1">Cytoplasm</location>
    </subcellularLocation>
</comment>
<comment type="similarity">
    <text evidence="1">Belongs to the thioester dehydratase family. FabZ subfamily.</text>
</comment>
<keyword id="KW-0963">Cytoplasm</keyword>
<keyword id="KW-0441">Lipid A biosynthesis</keyword>
<keyword id="KW-0444">Lipid biosynthesis</keyword>
<keyword id="KW-0443">Lipid metabolism</keyword>
<keyword id="KW-0456">Lyase</keyword>
<sequence length="145" mass="16302">MIIDITEIMDWIPHRYPFLLVDRVLKIDPNKSITGIKNVTVNEPQFTGHFPARPVMPGVLMVEAMAQLAAVLVAKSLGSTKNKEVFLMTIENAKFRRIVQPGDTMYIHAVIDQQRANVWKFSSTVTVEGEIAAESKFTAMIKDKT</sequence>
<accession>C3PM37</accession>
<reference key="1">
    <citation type="journal article" date="2009" name="BMC Genomics">
        <title>Analysis of the Rickettsia africae genome reveals that virulence acquisition in Rickettsia species may be explained by genome reduction.</title>
        <authorList>
            <person name="Fournier P.-E."/>
            <person name="El Karkouri K."/>
            <person name="Leroy Q."/>
            <person name="Robert C."/>
            <person name="Giumelli B."/>
            <person name="Renesto P."/>
            <person name="Socolovschi C."/>
            <person name="Parola P."/>
            <person name="Audic S."/>
            <person name="Raoult D."/>
        </authorList>
    </citation>
    <scope>NUCLEOTIDE SEQUENCE [LARGE SCALE GENOMIC DNA]</scope>
    <source>
        <strain>ESF-5</strain>
    </source>
</reference>
<organism>
    <name type="scientific">Rickettsia africae (strain ESF-5)</name>
    <dbReference type="NCBI Taxonomy" id="347255"/>
    <lineage>
        <taxon>Bacteria</taxon>
        <taxon>Pseudomonadati</taxon>
        <taxon>Pseudomonadota</taxon>
        <taxon>Alphaproteobacteria</taxon>
        <taxon>Rickettsiales</taxon>
        <taxon>Rickettsiaceae</taxon>
        <taxon>Rickettsieae</taxon>
        <taxon>Rickettsia</taxon>
        <taxon>spotted fever group</taxon>
    </lineage>
</organism>
<proteinExistence type="inferred from homology"/>
<evidence type="ECO:0000255" key="1">
    <source>
        <dbReference type="HAMAP-Rule" id="MF_00406"/>
    </source>
</evidence>
<protein>
    <recommendedName>
        <fullName evidence="1">3-hydroxyacyl-[acyl-carrier-protein] dehydratase FabZ</fullName>
        <ecNumber evidence="1">4.2.1.59</ecNumber>
    </recommendedName>
    <alternativeName>
        <fullName evidence="1">(3R)-hydroxymyristoyl-[acyl-carrier-protein] dehydratase</fullName>
        <shortName evidence="1">(3R)-hydroxymyristoyl-ACP dehydrase</shortName>
    </alternativeName>
    <alternativeName>
        <fullName evidence="1">Beta-hydroxyacyl-ACP dehydratase</fullName>
    </alternativeName>
</protein>
<dbReference type="EC" id="4.2.1.59" evidence="1"/>
<dbReference type="EMBL" id="CP001612">
    <property type="protein sequence ID" value="ACP52997.1"/>
    <property type="molecule type" value="Genomic_DNA"/>
</dbReference>
<dbReference type="RefSeq" id="WP_012719306.1">
    <property type="nucleotide sequence ID" value="NC_012633.1"/>
</dbReference>
<dbReference type="SMR" id="C3PM37"/>
<dbReference type="KEGG" id="raf:RAF_ORF0009"/>
<dbReference type="HOGENOM" id="CLU_078912_1_2_5"/>
<dbReference type="Proteomes" id="UP000002305">
    <property type="component" value="Chromosome"/>
</dbReference>
<dbReference type="GO" id="GO:0005737">
    <property type="term" value="C:cytoplasm"/>
    <property type="evidence" value="ECO:0007669"/>
    <property type="project" value="UniProtKB-SubCell"/>
</dbReference>
<dbReference type="GO" id="GO:0016020">
    <property type="term" value="C:membrane"/>
    <property type="evidence" value="ECO:0007669"/>
    <property type="project" value="GOC"/>
</dbReference>
<dbReference type="GO" id="GO:0019171">
    <property type="term" value="F:(3R)-hydroxyacyl-[acyl-carrier-protein] dehydratase activity"/>
    <property type="evidence" value="ECO:0007669"/>
    <property type="project" value="UniProtKB-EC"/>
</dbReference>
<dbReference type="GO" id="GO:0006633">
    <property type="term" value="P:fatty acid biosynthetic process"/>
    <property type="evidence" value="ECO:0007669"/>
    <property type="project" value="UniProtKB-UniRule"/>
</dbReference>
<dbReference type="GO" id="GO:0009245">
    <property type="term" value="P:lipid A biosynthetic process"/>
    <property type="evidence" value="ECO:0007669"/>
    <property type="project" value="UniProtKB-UniRule"/>
</dbReference>
<dbReference type="CDD" id="cd01288">
    <property type="entry name" value="FabZ"/>
    <property type="match status" value="1"/>
</dbReference>
<dbReference type="FunFam" id="3.10.129.10:FF:000001">
    <property type="entry name" value="3-hydroxyacyl-[acyl-carrier-protein] dehydratase FabZ"/>
    <property type="match status" value="1"/>
</dbReference>
<dbReference type="Gene3D" id="3.10.129.10">
    <property type="entry name" value="Hotdog Thioesterase"/>
    <property type="match status" value="1"/>
</dbReference>
<dbReference type="HAMAP" id="MF_00406">
    <property type="entry name" value="FabZ"/>
    <property type="match status" value="1"/>
</dbReference>
<dbReference type="InterPro" id="IPR013114">
    <property type="entry name" value="FabA_FabZ"/>
</dbReference>
<dbReference type="InterPro" id="IPR010084">
    <property type="entry name" value="FabZ"/>
</dbReference>
<dbReference type="InterPro" id="IPR029069">
    <property type="entry name" value="HotDog_dom_sf"/>
</dbReference>
<dbReference type="NCBIfam" id="TIGR01750">
    <property type="entry name" value="fabZ"/>
    <property type="match status" value="1"/>
</dbReference>
<dbReference type="NCBIfam" id="NF000582">
    <property type="entry name" value="PRK00006.1"/>
    <property type="match status" value="1"/>
</dbReference>
<dbReference type="PANTHER" id="PTHR30272">
    <property type="entry name" value="3-HYDROXYACYL-[ACYL-CARRIER-PROTEIN] DEHYDRATASE"/>
    <property type="match status" value="1"/>
</dbReference>
<dbReference type="PANTHER" id="PTHR30272:SF1">
    <property type="entry name" value="3-HYDROXYACYL-[ACYL-CARRIER-PROTEIN] DEHYDRATASE"/>
    <property type="match status" value="1"/>
</dbReference>
<dbReference type="Pfam" id="PF07977">
    <property type="entry name" value="FabA"/>
    <property type="match status" value="1"/>
</dbReference>
<dbReference type="SUPFAM" id="SSF54637">
    <property type="entry name" value="Thioesterase/thiol ester dehydrase-isomerase"/>
    <property type="match status" value="1"/>
</dbReference>
<name>FABZ_RICAE</name>
<gene>
    <name evidence="1" type="primary">fabZ</name>
    <name type="ordered locus">RAF_ORF0009</name>
</gene>